<organism>
    <name type="scientific">Bacillus subtilis (strain 168)</name>
    <dbReference type="NCBI Taxonomy" id="224308"/>
    <lineage>
        <taxon>Bacteria</taxon>
        <taxon>Bacillati</taxon>
        <taxon>Bacillota</taxon>
        <taxon>Bacilli</taxon>
        <taxon>Bacillales</taxon>
        <taxon>Bacillaceae</taxon>
        <taxon>Bacillus</taxon>
    </lineage>
</organism>
<reference key="1">
    <citation type="journal article" date="1986" name="J. Bacteriol.">
        <title>Identification of the pleiotropic sacQ gene of Bacillus subtilis.</title>
        <authorList>
            <person name="Yang M."/>
            <person name="Ferrari E."/>
            <person name="Chen E."/>
            <person name="Henner D.J."/>
        </authorList>
    </citation>
    <scope>NUCLEOTIDE SEQUENCE [GENOMIC DNA]</scope>
</reference>
<reference key="2">
    <citation type="journal article" date="1986" name="J. Bacteriol.">
        <authorList>
            <person name="Yang M."/>
            <person name="Ferrari E."/>
            <person name="Chen E."/>
            <person name="Henner D.J."/>
        </authorList>
    </citation>
    <scope>ERRATUM OF PUBMED:3007431</scope>
</reference>
<reference key="3">
    <citation type="journal article" date="1997" name="Microbiology">
        <title>Analysis of the Bacillus subtilis genome: cloning and nucleotide sequence of a 62 kb region between 275 degrees (rrnB) and 284 degrees (pai).</title>
        <authorList>
            <person name="Oudega B."/>
            <person name="Koningstein G."/>
            <person name="Rodrigues L."/>
            <person name="de Sales Ramon M."/>
            <person name="Hilbert H."/>
            <person name="Duesterhoeft A."/>
            <person name="Pohl T.M."/>
            <person name="Weitzenegger T."/>
        </authorList>
    </citation>
    <scope>NUCLEOTIDE SEQUENCE [GENOMIC DNA]</scope>
    <source>
        <strain>168</strain>
    </source>
</reference>
<reference key="4">
    <citation type="journal article" date="1999" name="Antimicrob. Agents Chemother.">
        <title>The genes degQ, pps, and lpa-8 (sfp) are responsible for conversion of Bacillus subtilis 168 to plipastatin production.</title>
        <authorList>
            <person name="Tsuge K."/>
            <person name="Ano T."/>
            <person name="Hirai M."/>
            <person name="Nakamura Y."/>
            <person name="Shoda M."/>
        </authorList>
    </citation>
    <scope>NUCLEOTIDE SEQUENCE [GENOMIC DNA]</scope>
    <source>
        <strain>YB8</strain>
    </source>
</reference>
<reference key="5">
    <citation type="journal article" date="2000" name="J. Bacteriol.">
        <title>A new IS4 family insertion sequence, IS4Bsu1, responsible for genetic instability of poly-gamma-glutamic acid production in Bacillus subtilis.</title>
        <authorList>
            <person name="Nagai T."/>
            <person name="Phan Tran L.S."/>
            <person name="Inatsu Y."/>
            <person name="Itoh Y."/>
        </authorList>
    </citation>
    <scope>NUCLEOTIDE SEQUENCE [GENOMIC DNA]</scope>
    <source>
        <strain>Asahikawa</strain>
    </source>
</reference>
<reference key="6">
    <citation type="journal article" date="1997" name="Nature">
        <title>The complete genome sequence of the Gram-positive bacterium Bacillus subtilis.</title>
        <authorList>
            <person name="Kunst F."/>
            <person name="Ogasawara N."/>
            <person name="Moszer I."/>
            <person name="Albertini A.M."/>
            <person name="Alloni G."/>
            <person name="Azevedo V."/>
            <person name="Bertero M.G."/>
            <person name="Bessieres P."/>
            <person name="Bolotin A."/>
            <person name="Borchert S."/>
            <person name="Borriss R."/>
            <person name="Boursier L."/>
            <person name="Brans A."/>
            <person name="Braun M."/>
            <person name="Brignell S.C."/>
            <person name="Bron S."/>
            <person name="Brouillet S."/>
            <person name="Bruschi C.V."/>
            <person name="Caldwell B."/>
            <person name="Capuano V."/>
            <person name="Carter N.M."/>
            <person name="Choi S.-K."/>
            <person name="Codani J.-J."/>
            <person name="Connerton I.F."/>
            <person name="Cummings N.J."/>
            <person name="Daniel R.A."/>
            <person name="Denizot F."/>
            <person name="Devine K.M."/>
            <person name="Duesterhoeft A."/>
            <person name="Ehrlich S.D."/>
            <person name="Emmerson P.T."/>
            <person name="Entian K.-D."/>
            <person name="Errington J."/>
            <person name="Fabret C."/>
            <person name="Ferrari E."/>
            <person name="Foulger D."/>
            <person name="Fritz C."/>
            <person name="Fujita M."/>
            <person name="Fujita Y."/>
            <person name="Fuma S."/>
            <person name="Galizzi A."/>
            <person name="Galleron N."/>
            <person name="Ghim S.-Y."/>
            <person name="Glaser P."/>
            <person name="Goffeau A."/>
            <person name="Golightly E.J."/>
            <person name="Grandi G."/>
            <person name="Guiseppi G."/>
            <person name="Guy B.J."/>
            <person name="Haga K."/>
            <person name="Haiech J."/>
            <person name="Harwood C.R."/>
            <person name="Henaut A."/>
            <person name="Hilbert H."/>
            <person name="Holsappel S."/>
            <person name="Hosono S."/>
            <person name="Hullo M.-F."/>
            <person name="Itaya M."/>
            <person name="Jones L.-M."/>
            <person name="Joris B."/>
            <person name="Karamata D."/>
            <person name="Kasahara Y."/>
            <person name="Klaerr-Blanchard M."/>
            <person name="Klein C."/>
            <person name="Kobayashi Y."/>
            <person name="Koetter P."/>
            <person name="Koningstein G."/>
            <person name="Krogh S."/>
            <person name="Kumano M."/>
            <person name="Kurita K."/>
            <person name="Lapidus A."/>
            <person name="Lardinois S."/>
            <person name="Lauber J."/>
            <person name="Lazarevic V."/>
            <person name="Lee S.-M."/>
            <person name="Levine A."/>
            <person name="Liu H."/>
            <person name="Masuda S."/>
            <person name="Mauel C."/>
            <person name="Medigue C."/>
            <person name="Medina N."/>
            <person name="Mellado R.P."/>
            <person name="Mizuno M."/>
            <person name="Moestl D."/>
            <person name="Nakai S."/>
            <person name="Noback M."/>
            <person name="Noone D."/>
            <person name="O'Reilly M."/>
            <person name="Ogawa K."/>
            <person name="Ogiwara A."/>
            <person name="Oudega B."/>
            <person name="Park S.-H."/>
            <person name="Parro V."/>
            <person name="Pohl T.M."/>
            <person name="Portetelle D."/>
            <person name="Porwollik S."/>
            <person name="Prescott A.M."/>
            <person name="Presecan E."/>
            <person name="Pujic P."/>
            <person name="Purnelle B."/>
            <person name="Rapoport G."/>
            <person name="Rey M."/>
            <person name="Reynolds S."/>
            <person name="Rieger M."/>
            <person name="Rivolta C."/>
            <person name="Rocha E."/>
            <person name="Roche B."/>
            <person name="Rose M."/>
            <person name="Sadaie Y."/>
            <person name="Sato T."/>
            <person name="Scanlan E."/>
            <person name="Schleich S."/>
            <person name="Schroeter R."/>
            <person name="Scoffone F."/>
            <person name="Sekiguchi J."/>
            <person name="Sekowska A."/>
            <person name="Seror S.J."/>
            <person name="Serror P."/>
            <person name="Shin B.-S."/>
            <person name="Soldo B."/>
            <person name="Sorokin A."/>
            <person name="Tacconi E."/>
            <person name="Takagi T."/>
            <person name="Takahashi H."/>
            <person name="Takemaru K."/>
            <person name="Takeuchi M."/>
            <person name="Tamakoshi A."/>
            <person name="Tanaka T."/>
            <person name="Terpstra P."/>
            <person name="Tognoni A."/>
            <person name="Tosato V."/>
            <person name="Uchiyama S."/>
            <person name="Vandenbol M."/>
            <person name="Vannier F."/>
            <person name="Vassarotti A."/>
            <person name="Viari A."/>
            <person name="Wambutt R."/>
            <person name="Wedler E."/>
            <person name="Wedler H."/>
            <person name="Weitzenegger T."/>
            <person name="Winters P."/>
            <person name="Wipat A."/>
            <person name="Yamamoto H."/>
            <person name="Yamane K."/>
            <person name="Yasumoto K."/>
            <person name="Yata K."/>
            <person name="Yoshida K."/>
            <person name="Yoshikawa H.-F."/>
            <person name="Zumstein E."/>
            <person name="Yoshikawa H."/>
            <person name="Danchin A."/>
        </authorList>
    </citation>
    <scope>NUCLEOTIDE SEQUENCE [LARGE SCALE GENOMIC DNA]</scope>
    <source>
        <strain>168</strain>
    </source>
</reference>
<reference key="7">
    <citation type="journal article" date="1991" name="J. Bacteriol.">
        <title>Sequence and properties of comQ, a new competence regulatory gene of Bacillus subtilis.</title>
        <authorList>
            <person name="Weinrauch Y."/>
            <person name="Msadek T."/>
            <person name="Kunst F."/>
            <person name="Dubnau D."/>
        </authorList>
    </citation>
    <scope>NUCLEOTIDE SEQUENCE [GENOMIC DNA] OF 41-46</scope>
    <source>
        <strain>168</strain>
    </source>
</reference>
<reference key="8">
    <citation type="journal article" date="2007" name="Mol. Microbiol.">
        <title>Gradual activation of the response regulator DegU controls serial expression of genes for flagellum formation and biofilm formation in Bacillus subtilis.</title>
        <authorList>
            <person name="Kobayashi K."/>
        </authorList>
    </citation>
    <scope>FUNCTION IN STIMULATION OF PHOSPHOTRANSFER</scope>
</reference>
<name>DEGQ_BACSU</name>
<sequence>MEKKLEEVKQLLFRLELDIKETTDSLRNINKSIDQLDKYNYAMKIS</sequence>
<feature type="chain" id="PRO_0000079855" description="Degradation enzyme regulation protein DegQ">
    <location>
        <begin position="1"/>
        <end position="46"/>
    </location>
</feature>
<gene>
    <name type="primary">degQ</name>
    <name type="synonym">amyB</name>
    <name type="synonym">sacQ</name>
    <name type="ordered locus">BSU31720</name>
</gene>
<evidence type="ECO:0000269" key="1">
    <source>
    </source>
</evidence>
<evidence type="ECO:0000305" key="2"/>
<accession>Q99039</accession>
<dbReference type="EMBL" id="M12501">
    <property type="protein sequence ID" value="AAA22731.1"/>
    <property type="molecule type" value="Genomic_DNA"/>
</dbReference>
<dbReference type="EMBL" id="Z93932">
    <property type="protein sequence ID" value="CAB07901.1"/>
    <property type="molecule type" value="Genomic_DNA"/>
</dbReference>
<dbReference type="EMBL" id="AB010576">
    <property type="protein sequence ID" value="BAA87332.1"/>
    <property type="molecule type" value="Genomic_DNA"/>
</dbReference>
<dbReference type="EMBL" id="AB039951">
    <property type="protein sequence ID" value="BAB13490.1"/>
    <property type="molecule type" value="Genomic_DNA"/>
</dbReference>
<dbReference type="EMBL" id="AL009126">
    <property type="protein sequence ID" value="CAB15160.1"/>
    <property type="molecule type" value="Genomic_DNA"/>
</dbReference>
<dbReference type="EMBL" id="M71283">
    <property type="protein sequence ID" value="AAA22322.1"/>
    <property type="molecule type" value="Genomic_DNA"/>
</dbReference>
<dbReference type="PIR" id="H69613">
    <property type="entry name" value="H69613"/>
</dbReference>
<dbReference type="RefSeq" id="NP_391050.1">
    <property type="nucleotide sequence ID" value="NC_000964.3"/>
</dbReference>
<dbReference type="RefSeq" id="WP_003220708.1">
    <property type="nucleotide sequence ID" value="NZ_OZ025638.1"/>
</dbReference>
<dbReference type="SMR" id="Q99039"/>
<dbReference type="FunCoup" id="Q99039">
    <property type="interactions" value="45"/>
</dbReference>
<dbReference type="STRING" id="224308.BSU31720"/>
<dbReference type="PaxDb" id="224308-BSU31720"/>
<dbReference type="EnsemblBacteria" id="CAB15160">
    <property type="protein sequence ID" value="CAB15160"/>
    <property type="gene ID" value="BSU_31720"/>
</dbReference>
<dbReference type="GeneID" id="86872290"/>
<dbReference type="GeneID" id="936547"/>
<dbReference type="KEGG" id="bsu:BSU31720"/>
<dbReference type="PATRIC" id="fig|224308.179.peg.3437"/>
<dbReference type="InParanoid" id="Q99039"/>
<dbReference type="OrthoDB" id="2927104at2"/>
<dbReference type="BioCyc" id="BSUB:BSU31720-MONOMER"/>
<dbReference type="PRO" id="PR:Q99039"/>
<dbReference type="Proteomes" id="UP000001570">
    <property type="component" value="Chromosome"/>
</dbReference>
<dbReference type="GO" id="GO:1900192">
    <property type="term" value="P:positive regulation of single-species biofilm formation"/>
    <property type="evidence" value="ECO:0000315"/>
    <property type="project" value="CACAO"/>
</dbReference>
<dbReference type="InterPro" id="IPR012554">
    <property type="entry name" value="DegQ"/>
</dbReference>
<dbReference type="NCBIfam" id="NF041457">
    <property type="entry name" value="reg_protDegQ_Bacil"/>
    <property type="match status" value="1"/>
</dbReference>
<dbReference type="Pfam" id="PF08181">
    <property type="entry name" value="DegQ"/>
    <property type="match status" value="1"/>
</dbReference>
<protein>
    <recommendedName>
        <fullName>Degradation enzyme regulation protein DegQ</fullName>
    </recommendedName>
    <alternativeName>
        <fullName>Regulatory factor SacQ</fullName>
    </alternativeName>
</protein>
<proteinExistence type="evidence at protein level"/>
<comment type="function">
    <text evidence="1">Stimulates the phosphotransfer from phospho-DegS to DegU. Affects protease and levansucrose production.</text>
</comment>
<comment type="similarity">
    <text evidence="2">Belongs to the DegQ family.</text>
</comment>
<keyword id="KW-1185">Reference proteome</keyword>